<sequence>MSNTQKQLALAKAAKKSVNTADAEEKNRALLAMADSLEAAAEDILAANRLDLKAAAGKIPDSMTDRLLLDGKRICAMADGIRAVAALPDPVGEILETSTLPNGLEIVKKRVAMGVIGIIYESRPNVTSDAAALALKSGSAVVLRSGKDAFQSARAIVAALKTGLAQTRIDPEAVQLIEDTGREGSYEMMRAKDYLDLLIPRGGAGLIRAVVENAVVPVIETGTGIVHIYIDKDADWDKALRIVYNAKTGRPSVCNSMEVLLVHEGIAADFLPKLERLLVRGRIEAGLPPVRFRLDPQAARYIGGEAAGADDFDTEFLDYILAVKTVASVEEAVGHIEARGTHHSDGIVTENRHAADYFTTHIDSAAVYINASTRFTDGGEFGLGCEMGISTQKLHARGPMGLKELTSYKYIVQGTGQVRE</sequence>
<protein>
    <recommendedName>
        <fullName evidence="1">Gamma-glutamyl phosphate reductase</fullName>
        <shortName evidence="1">GPR</shortName>
        <ecNumber evidence="1">1.2.1.41</ecNumber>
    </recommendedName>
    <alternativeName>
        <fullName evidence="1">Glutamate-5-semialdehyde dehydrogenase</fullName>
    </alternativeName>
    <alternativeName>
        <fullName evidence="1">Glutamyl-gamma-semialdehyde dehydrogenase</fullName>
        <shortName evidence="1">GSA dehydrogenase</shortName>
    </alternativeName>
</protein>
<gene>
    <name evidence="1" type="primary">proA</name>
    <name type="ordered locus">NGO_0850</name>
</gene>
<evidence type="ECO:0000255" key="1">
    <source>
        <dbReference type="HAMAP-Rule" id="MF_00412"/>
    </source>
</evidence>
<proteinExistence type="inferred from homology"/>
<feature type="chain" id="PRO_0000189754" description="Gamma-glutamyl phosphate reductase">
    <location>
        <begin position="1"/>
        <end position="420"/>
    </location>
</feature>
<reference key="1">
    <citation type="submission" date="2003-03" db="EMBL/GenBank/DDBJ databases">
        <title>The complete genome sequence of Neisseria gonorrhoeae.</title>
        <authorList>
            <person name="Lewis L.A."/>
            <person name="Gillaspy A.F."/>
            <person name="McLaughlin R.E."/>
            <person name="Gipson M."/>
            <person name="Ducey T.F."/>
            <person name="Ownbey T."/>
            <person name="Hartman K."/>
            <person name="Nydick C."/>
            <person name="Carson M.B."/>
            <person name="Vaughn J."/>
            <person name="Thomson C."/>
            <person name="Song L."/>
            <person name="Lin S."/>
            <person name="Yuan X."/>
            <person name="Najar F."/>
            <person name="Zhan M."/>
            <person name="Ren Q."/>
            <person name="Zhu H."/>
            <person name="Qi S."/>
            <person name="Kenton S.M."/>
            <person name="Lai H."/>
            <person name="White J.D."/>
            <person name="Clifton S."/>
            <person name="Roe B.A."/>
            <person name="Dyer D.W."/>
        </authorList>
    </citation>
    <scope>NUCLEOTIDE SEQUENCE [LARGE SCALE GENOMIC DNA]</scope>
    <source>
        <strain>ATCC 700825 / FA 1090</strain>
    </source>
</reference>
<dbReference type="EC" id="1.2.1.41" evidence="1"/>
<dbReference type="EMBL" id="AE004969">
    <property type="protein sequence ID" value="AAW89554.1"/>
    <property type="molecule type" value="Genomic_DNA"/>
</dbReference>
<dbReference type="RefSeq" id="WP_003693256.1">
    <property type="nucleotide sequence ID" value="NC_002946.2"/>
</dbReference>
<dbReference type="RefSeq" id="YP_207966.1">
    <property type="nucleotide sequence ID" value="NC_002946.2"/>
</dbReference>
<dbReference type="SMR" id="Q5F8D3"/>
<dbReference type="STRING" id="242231.NGO_0850"/>
<dbReference type="KEGG" id="ngo:NGO_0850"/>
<dbReference type="PATRIC" id="fig|242231.10.peg.1005"/>
<dbReference type="HOGENOM" id="CLU_030231_0_0_4"/>
<dbReference type="UniPathway" id="UPA00098">
    <property type="reaction ID" value="UER00360"/>
</dbReference>
<dbReference type="Proteomes" id="UP000000535">
    <property type="component" value="Chromosome"/>
</dbReference>
<dbReference type="GO" id="GO:0005737">
    <property type="term" value="C:cytoplasm"/>
    <property type="evidence" value="ECO:0007669"/>
    <property type="project" value="UniProtKB-SubCell"/>
</dbReference>
<dbReference type="GO" id="GO:0004350">
    <property type="term" value="F:glutamate-5-semialdehyde dehydrogenase activity"/>
    <property type="evidence" value="ECO:0007669"/>
    <property type="project" value="UniProtKB-UniRule"/>
</dbReference>
<dbReference type="GO" id="GO:0050661">
    <property type="term" value="F:NADP binding"/>
    <property type="evidence" value="ECO:0007669"/>
    <property type="project" value="InterPro"/>
</dbReference>
<dbReference type="GO" id="GO:0055129">
    <property type="term" value="P:L-proline biosynthetic process"/>
    <property type="evidence" value="ECO:0007669"/>
    <property type="project" value="UniProtKB-UniRule"/>
</dbReference>
<dbReference type="CDD" id="cd07079">
    <property type="entry name" value="ALDH_F18-19_ProA-GPR"/>
    <property type="match status" value="1"/>
</dbReference>
<dbReference type="FunFam" id="3.40.309.10:FF:000006">
    <property type="entry name" value="Gamma-glutamyl phosphate reductase"/>
    <property type="match status" value="1"/>
</dbReference>
<dbReference type="Gene3D" id="3.40.605.10">
    <property type="entry name" value="Aldehyde Dehydrogenase, Chain A, domain 1"/>
    <property type="match status" value="1"/>
</dbReference>
<dbReference type="Gene3D" id="3.40.309.10">
    <property type="entry name" value="Aldehyde Dehydrogenase, Chain A, domain 2"/>
    <property type="match status" value="1"/>
</dbReference>
<dbReference type="HAMAP" id="MF_00412">
    <property type="entry name" value="ProA"/>
    <property type="match status" value="1"/>
</dbReference>
<dbReference type="InterPro" id="IPR016161">
    <property type="entry name" value="Ald_DH/histidinol_DH"/>
</dbReference>
<dbReference type="InterPro" id="IPR016163">
    <property type="entry name" value="Ald_DH_C"/>
</dbReference>
<dbReference type="InterPro" id="IPR016162">
    <property type="entry name" value="Ald_DH_N"/>
</dbReference>
<dbReference type="InterPro" id="IPR015590">
    <property type="entry name" value="Aldehyde_DH_dom"/>
</dbReference>
<dbReference type="InterPro" id="IPR020593">
    <property type="entry name" value="G-glutamylP_reductase_CS"/>
</dbReference>
<dbReference type="InterPro" id="IPR012134">
    <property type="entry name" value="Glu-5-SA_DH"/>
</dbReference>
<dbReference type="InterPro" id="IPR000965">
    <property type="entry name" value="GPR_dom"/>
</dbReference>
<dbReference type="NCBIfam" id="NF001221">
    <property type="entry name" value="PRK00197.1"/>
    <property type="match status" value="1"/>
</dbReference>
<dbReference type="NCBIfam" id="TIGR00407">
    <property type="entry name" value="proA"/>
    <property type="match status" value="1"/>
</dbReference>
<dbReference type="PANTHER" id="PTHR11063:SF8">
    <property type="entry name" value="DELTA-1-PYRROLINE-5-CARBOXYLATE SYNTHASE"/>
    <property type="match status" value="1"/>
</dbReference>
<dbReference type="PANTHER" id="PTHR11063">
    <property type="entry name" value="GLUTAMATE SEMIALDEHYDE DEHYDROGENASE"/>
    <property type="match status" value="1"/>
</dbReference>
<dbReference type="Pfam" id="PF00171">
    <property type="entry name" value="Aldedh"/>
    <property type="match status" value="1"/>
</dbReference>
<dbReference type="PIRSF" id="PIRSF000151">
    <property type="entry name" value="GPR"/>
    <property type="match status" value="1"/>
</dbReference>
<dbReference type="SUPFAM" id="SSF53720">
    <property type="entry name" value="ALDH-like"/>
    <property type="match status" value="1"/>
</dbReference>
<dbReference type="PROSITE" id="PS01223">
    <property type="entry name" value="PROA"/>
    <property type="match status" value="1"/>
</dbReference>
<keyword id="KW-0028">Amino-acid biosynthesis</keyword>
<keyword id="KW-0963">Cytoplasm</keyword>
<keyword id="KW-0521">NADP</keyword>
<keyword id="KW-0560">Oxidoreductase</keyword>
<keyword id="KW-0641">Proline biosynthesis</keyword>
<keyword id="KW-1185">Reference proteome</keyword>
<comment type="function">
    <text evidence="1">Catalyzes the NADPH-dependent reduction of L-glutamate 5-phosphate into L-glutamate 5-semialdehyde and phosphate. The product spontaneously undergoes cyclization to form 1-pyrroline-5-carboxylate.</text>
</comment>
<comment type="catalytic activity">
    <reaction evidence="1">
        <text>L-glutamate 5-semialdehyde + phosphate + NADP(+) = L-glutamyl 5-phosphate + NADPH + H(+)</text>
        <dbReference type="Rhea" id="RHEA:19541"/>
        <dbReference type="ChEBI" id="CHEBI:15378"/>
        <dbReference type="ChEBI" id="CHEBI:43474"/>
        <dbReference type="ChEBI" id="CHEBI:57783"/>
        <dbReference type="ChEBI" id="CHEBI:58066"/>
        <dbReference type="ChEBI" id="CHEBI:58274"/>
        <dbReference type="ChEBI" id="CHEBI:58349"/>
        <dbReference type="EC" id="1.2.1.41"/>
    </reaction>
</comment>
<comment type="pathway">
    <text evidence="1">Amino-acid biosynthesis; L-proline biosynthesis; L-glutamate 5-semialdehyde from L-glutamate: step 2/2.</text>
</comment>
<comment type="subcellular location">
    <subcellularLocation>
        <location evidence="1">Cytoplasm</location>
    </subcellularLocation>
</comment>
<comment type="similarity">
    <text evidence="1">Belongs to the gamma-glutamyl phosphate reductase family.</text>
</comment>
<name>PROA_NEIG1</name>
<accession>Q5F8D3</accession>
<organism>
    <name type="scientific">Neisseria gonorrhoeae (strain ATCC 700825 / FA 1090)</name>
    <dbReference type="NCBI Taxonomy" id="242231"/>
    <lineage>
        <taxon>Bacteria</taxon>
        <taxon>Pseudomonadati</taxon>
        <taxon>Pseudomonadota</taxon>
        <taxon>Betaproteobacteria</taxon>
        <taxon>Neisseriales</taxon>
        <taxon>Neisseriaceae</taxon>
        <taxon>Neisseria</taxon>
    </lineage>
</organism>